<evidence type="ECO:0000250" key="1">
    <source>
        <dbReference type="UniProtKB" id="A2RSQ0"/>
    </source>
</evidence>
<evidence type="ECO:0000250" key="2">
    <source>
        <dbReference type="UniProtKB" id="Q6IQ26"/>
    </source>
</evidence>
<evidence type="ECO:0000250" key="3">
    <source>
        <dbReference type="UniProtKB" id="Q6PAL8"/>
    </source>
</evidence>
<evidence type="ECO:0000255" key="4"/>
<evidence type="ECO:0000255" key="5">
    <source>
        <dbReference type="PROSITE-ProRule" id="PRU00152"/>
    </source>
</evidence>
<evidence type="ECO:0000255" key="6">
    <source>
        <dbReference type="PROSITE-ProRule" id="PRU00178"/>
    </source>
</evidence>
<evidence type="ECO:0000255" key="7">
    <source>
        <dbReference type="PROSITE-ProRule" id="PRU00304"/>
    </source>
</evidence>
<evidence type="ECO:0000269" key="8">
    <source>
    </source>
</evidence>
<evidence type="ECO:0000269" key="9">
    <source>
    </source>
</evidence>
<evidence type="ECO:0000269" key="10">
    <source ref="5"/>
</evidence>
<evidence type="ECO:0000303" key="11">
    <source>
    </source>
</evidence>
<evidence type="ECO:0000303" key="12">
    <source>
    </source>
</evidence>
<evidence type="ECO:0000305" key="13"/>
<evidence type="ECO:0007744" key="14">
    <source>
    </source>
</evidence>
<evidence type="ECO:0007744" key="15">
    <source>
    </source>
</evidence>
<evidence type="ECO:0007744" key="16">
    <source>
    </source>
</evidence>
<evidence type="ECO:0007744" key="17">
    <source>
    </source>
</evidence>
<evidence type="ECO:0007744" key="18">
    <source>
    </source>
</evidence>
<evidence type="ECO:0007744" key="19">
    <source>
    </source>
</evidence>
<name>DEN5B_HUMAN</name>
<accession>Q6ZUT9</accession>
<accession>B5ME75</accession>
<accession>Q59FW8</accession>
<accession>Q68CZ7</accession>
<accession>Q6NUJ0</accession>
<accession>Q7Z3F9</accession>
<accession>Q8N973</accession>
<accession>Q8WUC8</accession>
<proteinExistence type="evidence at protein level"/>
<gene>
    <name type="primary">DENND5B</name>
</gene>
<comment type="function">
    <text evidence="9">Guanine nucleotide exchange factor (GEF) which may activate RAB39A and/or RAB39B. Promotes the exchange of GDP to GTP, converting inactive GDP-bound Rab proteins into their active GTP-bound form.</text>
</comment>
<comment type="subcellular location">
    <subcellularLocation>
        <location evidence="13">Membrane</location>
        <topology evidence="13">Single-pass membrane protein</topology>
    </subcellularLocation>
</comment>
<comment type="alternative products">
    <event type="alternative splicing"/>
    <isoform>
        <id>Q6ZUT9-1</id>
        <name>1</name>
        <sequence type="displayed"/>
    </isoform>
    <isoform>
        <id>Q6ZUT9-2</id>
        <name>2</name>
        <sequence type="described" ref="VSP_032673"/>
    </isoform>
    <isoform>
        <id>Q6ZUT9-3</id>
        <name>3</name>
        <sequence type="described" ref="VSP_032672 VSP_032675 VSP_032676"/>
    </isoform>
    <isoform>
        <id>Q6ZUT9-4</id>
        <name>4</name>
        <sequence type="described" ref="VSP_032674 VSP_032677 VSP_032678"/>
    </isoform>
</comment>
<comment type="similarity">
    <text evidence="13">Belongs to the RAB6IP1 family.</text>
</comment>
<comment type="sequence caution" evidence="13">
    <conflict type="erroneous initiation">
        <sequence resource="EMBL-CDS" id="BAC04583"/>
    </conflict>
</comment>
<protein>
    <recommendedName>
        <fullName>DENN domain-containing protein 5B</fullName>
    </recommendedName>
    <alternativeName>
        <fullName>Rab6IP1-like protein</fullName>
    </alternativeName>
</protein>
<keyword id="KW-0007">Acetylation</keyword>
<keyword id="KW-0025">Alternative splicing</keyword>
<keyword id="KW-0344">Guanine-nucleotide releasing factor</keyword>
<keyword id="KW-0472">Membrane</keyword>
<keyword id="KW-0597">Phosphoprotein</keyword>
<keyword id="KW-1267">Proteomics identification</keyword>
<keyword id="KW-1185">Reference proteome</keyword>
<keyword id="KW-0677">Repeat</keyword>
<keyword id="KW-0812">Transmembrane</keyword>
<keyword id="KW-1133">Transmembrane helix</keyword>
<sequence>MSGSCAAPGPGSGSSPAACRFAHYFVLCGIDADSGLEPDELAGENFDQSPLRRTFKSKVLAHYPQNIEWNPFDQDAVNMLCMPKGLSFRTQTDNKDPQFHSFIITREDGSRTYGFVLTFYEEVTSKQICTAMQTLYQMHNAEHYSSVYASSSCSMDSLASSLDEGDTTSLLKLQRYNSYDISRDTLYVSKSICLITPLPFMQACKKFLIQLYKAVTSQQPPPLPLESYIHNILYEVPLPPPGRSLKFYGVYEPVICQRPGPSELPLSDYPLREAFELLGLENLVQVFTCVLLEMQILLYSQDYQRLMTVAEGITTLLFPFQWQHVYVPILPASLLHFLDAPVPYLMGLQSKEGTDRSKLELPQEANLCFVDIDNHFIELPEEFPQFPNKVDFIQELSEVLVQFGIPPEGSLHCSESTSKLKNMVLKDLVNDKKNGNVCTNNISMYELLKGNETIARLQALAKRTGVAVEKMDLSASLGEKDKDLKLHCEEAELRDYQLNVQLREVFANRFTQMFADYEAFVIQTAQDMESWLTNREQMQNFDKASFLSDQPEPYLPFLSRFIETQMFATFIDNKIMSQWEEKDPLLRVFDTRIDKIRLYNVRAPTLRTSIYQKCSTLKEAAQSIEQRLMKMDHTAIHPHLLDMKIGQGKYEQGFFPKLQSDVLATGPTSNNRWVSRSATAQRRKERLRQHSEHVGLDNDLREKYMQEARSLGKNLRQPKLSDLSPAVIAQTNCKFVEGLLKECRMKTKRMLVEKMGHEAVELGHGEANITGLEENTLIASLCDLLERIWSHGLQVKQGKSALWSHLIQFQDREEKQEHLAESPVALGPERRKSDSGVMLPTLRVSLIQDMRHIQNMSEIKTDVGRARAWIRLSLEKKLLSQHLKQLLSNQPLTKKLYKRYAFLRCEEEREQFLYHLLSLNAVDYFCFTSVFTTIMIPYRSVIIPIKKLSNAIITSNPWICVSGELGDTGVMQIPKNLLEMTFECQNLGKLTTVQIGHDNSGLLAKWLVDCVMVRNEITGHTYRFPCGRWLGKGIDDGSLERILIGELMTSASDEDLVKQCRTPPQQKSPTTARRLSITSLTGKNNKPNAGQIQEGIGEAVNNIVKHFHKPEKERGSLTVLLCGENGLVAALEQVFHHGFKSARIFHKNVFIWDFIEKVVAYFETTDQILDNEDDVLIQKSSCKTFCHYVNAINTAPRNIGKDGKFQILVCLGTRDRLLPQWIPLLAECPAITRMYEESALLRDRMTVNSLIRILQTIQDFTIVLEGSLIKGVDV</sequence>
<reference key="1">
    <citation type="journal article" date="2004" name="Nat. Genet.">
        <title>Complete sequencing and characterization of 21,243 full-length human cDNAs.</title>
        <authorList>
            <person name="Ota T."/>
            <person name="Suzuki Y."/>
            <person name="Nishikawa T."/>
            <person name="Otsuki T."/>
            <person name="Sugiyama T."/>
            <person name="Irie R."/>
            <person name="Wakamatsu A."/>
            <person name="Hayashi K."/>
            <person name="Sato H."/>
            <person name="Nagai K."/>
            <person name="Kimura K."/>
            <person name="Makita H."/>
            <person name="Sekine M."/>
            <person name="Obayashi M."/>
            <person name="Nishi T."/>
            <person name="Shibahara T."/>
            <person name="Tanaka T."/>
            <person name="Ishii S."/>
            <person name="Yamamoto J."/>
            <person name="Saito K."/>
            <person name="Kawai Y."/>
            <person name="Isono Y."/>
            <person name="Nakamura Y."/>
            <person name="Nagahari K."/>
            <person name="Murakami K."/>
            <person name="Yasuda T."/>
            <person name="Iwayanagi T."/>
            <person name="Wagatsuma M."/>
            <person name="Shiratori A."/>
            <person name="Sudo H."/>
            <person name="Hosoiri T."/>
            <person name="Kaku Y."/>
            <person name="Kodaira H."/>
            <person name="Kondo H."/>
            <person name="Sugawara M."/>
            <person name="Takahashi M."/>
            <person name="Kanda K."/>
            <person name="Yokoi T."/>
            <person name="Furuya T."/>
            <person name="Kikkawa E."/>
            <person name="Omura Y."/>
            <person name="Abe K."/>
            <person name="Kamihara K."/>
            <person name="Katsuta N."/>
            <person name="Sato K."/>
            <person name="Tanikawa M."/>
            <person name="Yamazaki M."/>
            <person name="Ninomiya K."/>
            <person name="Ishibashi T."/>
            <person name="Yamashita H."/>
            <person name="Murakawa K."/>
            <person name="Fujimori K."/>
            <person name="Tanai H."/>
            <person name="Kimata M."/>
            <person name="Watanabe M."/>
            <person name="Hiraoka S."/>
            <person name="Chiba Y."/>
            <person name="Ishida S."/>
            <person name="Ono Y."/>
            <person name="Takiguchi S."/>
            <person name="Watanabe S."/>
            <person name="Yosida M."/>
            <person name="Hotuta T."/>
            <person name="Kusano J."/>
            <person name="Kanehori K."/>
            <person name="Takahashi-Fujii A."/>
            <person name="Hara H."/>
            <person name="Tanase T.-O."/>
            <person name="Nomura Y."/>
            <person name="Togiya S."/>
            <person name="Komai F."/>
            <person name="Hara R."/>
            <person name="Takeuchi K."/>
            <person name="Arita M."/>
            <person name="Imose N."/>
            <person name="Musashino K."/>
            <person name="Yuuki H."/>
            <person name="Oshima A."/>
            <person name="Sasaki N."/>
            <person name="Aotsuka S."/>
            <person name="Yoshikawa Y."/>
            <person name="Matsunawa H."/>
            <person name="Ichihara T."/>
            <person name="Shiohata N."/>
            <person name="Sano S."/>
            <person name="Moriya S."/>
            <person name="Momiyama H."/>
            <person name="Satoh N."/>
            <person name="Takami S."/>
            <person name="Terashima Y."/>
            <person name="Suzuki O."/>
            <person name="Nakagawa S."/>
            <person name="Senoh A."/>
            <person name="Mizoguchi H."/>
            <person name="Goto Y."/>
            <person name="Shimizu F."/>
            <person name="Wakebe H."/>
            <person name="Hishigaki H."/>
            <person name="Watanabe T."/>
            <person name="Sugiyama A."/>
            <person name="Takemoto M."/>
            <person name="Kawakami B."/>
            <person name="Yamazaki M."/>
            <person name="Watanabe K."/>
            <person name="Kumagai A."/>
            <person name="Itakura S."/>
            <person name="Fukuzumi Y."/>
            <person name="Fujimori Y."/>
            <person name="Komiyama M."/>
            <person name="Tashiro H."/>
            <person name="Tanigami A."/>
            <person name="Fujiwara T."/>
            <person name="Ono T."/>
            <person name="Yamada K."/>
            <person name="Fujii Y."/>
            <person name="Ozaki K."/>
            <person name="Hirao M."/>
            <person name="Ohmori Y."/>
            <person name="Kawabata A."/>
            <person name="Hikiji T."/>
            <person name="Kobatake N."/>
            <person name="Inagaki H."/>
            <person name="Ikema Y."/>
            <person name="Okamoto S."/>
            <person name="Okitani R."/>
            <person name="Kawakami T."/>
            <person name="Noguchi S."/>
            <person name="Itoh T."/>
            <person name="Shigeta K."/>
            <person name="Senba T."/>
            <person name="Matsumura K."/>
            <person name="Nakajima Y."/>
            <person name="Mizuno T."/>
            <person name="Morinaga M."/>
            <person name="Sasaki M."/>
            <person name="Togashi T."/>
            <person name="Oyama M."/>
            <person name="Hata H."/>
            <person name="Watanabe M."/>
            <person name="Komatsu T."/>
            <person name="Mizushima-Sugano J."/>
            <person name="Satoh T."/>
            <person name="Shirai Y."/>
            <person name="Takahashi Y."/>
            <person name="Nakagawa K."/>
            <person name="Okumura K."/>
            <person name="Nagase T."/>
            <person name="Nomura N."/>
            <person name="Kikuchi H."/>
            <person name="Masuho Y."/>
            <person name="Yamashita R."/>
            <person name="Nakai K."/>
            <person name="Yada T."/>
            <person name="Nakamura Y."/>
            <person name="Ohara O."/>
            <person name="Isogai T."/>
            <person name="Sugano S."/>
        </authorList>
    </citation>
    <scope>NUCLEOTIDE SEQUENCE [LARGE SCALE MRNA] (ISOFORM 2)</scope>
    <scope>NUCLEOTIDE SEQUENCE [LARGE SCALE MRNA] OF 336-1274 (ISOFORM 1)</scope>
    <scope>VARIANTS LYS-52 AND ASN-487</scope>
    <source>
        <tissue>Brain</tissue>
    </source>
</reference>
<reference key="2">
    <citation type="journal article" date="2006" name="Nature">
        <title>The finished DNA sequence of human chromosome 12.</title>
        <authorList>
            <person name="Scherer S.E."/>
            <person name="Muzny D.M."/>
            <person name="Buhay C.J."/>
            <person name="Chen R."/>
            <person name="Cree A."/>
            <person name="Ding Y."/>
            <person name="Dugan-Rocha S."/>
            <person name="Gill R."/>
            <person name="Gunaratne P."/>
            <person name="Harris R.A."/>
            <person name="Hawes A.C."/>
            <person name="Hernandez J."/>
            <person name="Hodgson A.V."/>
            <person name="Hume J."/>
            <person name="Jackson A."/>
            <person name="Khan Z.M."/>
            <person name="Kovar-Smith C."/>
            <person name="Lewis L.R."/>
            <person name="Lozado R.J."/>
            <person name="Metzker M.L."/>
            <person name="Milosavljevic A."/>
            <person name="Miner G.R."/>
            <person name="Montgomery K.T."/>
            <person name="Morgan M.B."/>
            <person name="Nazareth L.V."/>
            <person name="Scott G."/>
            <person name="Sodergren E."/>
            <person name="Song X.-Z."/>
            <person name="Steffen D."/>
            <person name="Lovering R.C."/>
            <person name="Wheeler D.A."/>
            <person name="Worley K.C."/>
            <person name="Yuan Y."/>
            <person name="Zhang Z."/>
            <person name="Adams C.Q."/>
            <person name="Ansari-Lari M.A."/>
            <person name="Ayele M."/>
            <person name="Brown M.J."/>
            <person name="Chen G."/>
            <person name="Chen Z."/>
            <person name="Clerc-Blankenburg K.P."/>
            <person name="Davis C."/>
            <person name="Delgado O."/>
            <person name="Dinh H.H."/>
            <person name="Draper H."/>
            <person name="Gonzalez-Garay M.L."/>
            <person name="Havlak P."/>
            <person name="Jackson L.R."/>
            <person name="Jacob L.S."/>
            <person name="Kelly S.H."/>
            <person name="Li L."/>
            <person name="Li Z."/>
            <person name="Liu J."/>
            <person name="Liu W."/>
            <person name="Lu J."/>
            <person name="Maheshwari M."/>
            <person name="Nguyen B.-V."/>
            <person name="Okwuonu G.O."/>
            <person name="Pasternak S."/>
            <person name="Perez L.M."/>
            <person name="Plopper F.J.H."/>
            <person name="Santibanez J."/>
            <person name="Shen H."/>
            <person name="Tabor P.E."/>
            <person name="Verduzco D."/>
            <person name="Waldron L."/>
            <person name="Wang Q."/>
            <person name="Williams G.A."/>
            <person name="Zhang J."/>
            <person name="Zhou J."/>
            <person name="Allen C.C."/>
            <person name="Amin A.G."/>
            <person name="Anyalebechi V."/>
            <person name="Bailey M."/>
            <person name="Barbaria J.A."/>
            <person name="Bimage K.E."/>
            <person name="Bryant N.P."/>
            <person name="Burch P.E."/>
            <person name="Burkett C.E."/>
            <person name="Burrell K.L."/>
            <person name="Calderon E."/>
            <person name="Cardenas V."/>
            <person name="Carter K."/>
            <person name="Casias K."/>
            <person name="Cavazos I."/>
            <person name="Cavazos S.R."/>
            <person name="Ceasar H."/>
            <person name="Chacko J."/>
            <person name="Chan S.N."/>
            <person name="Chavez D."/>
            <person name="Christopoulos C."/>
            <person name="Chu J."/>
            <person name="Cockrell R."/>
            <person name="Cox C.D."/>
            <person name="Dang M."/>
            <person name="Dathorne S.R."/>
            <person name="David R."/>
            <person name="Davis C.M."/>
            <person name="Davy-Carroll L."/>
            <person name="Deshazo D.R."/>
            <person name="Donlin J.E."/>
            <person name="D'Souza L."/>
            <person name="Eaves K.A."/>
            <person name="Egan A."/>
            <person name="Emery-Cohen A.J."/>
            <person name="Escotto M."/>
            <person name="Flagg N."/>
            <person name="Forbes L.D."/>
            <person name="Gabisi A.M."/>
            <person name="Garza M."/>
            <person name="Hamilton C."/>
            <person name="Henderson N."/>
            <person name="Hernandez O."/>
            <person name="Hines S."/>
            <person name="Hogues M.E."/>
            <person name="Huang M."/>
            <person name="Idlebird D.G."/>
            <person name="Johnson R."/>
            <person name="Jolivet A."/>
            <person name="Jones S."/>
            <person name="Kagan R."/>
            <person name="King L.M."/>
            <person name="Leal B."/>
            <person name="Lebow H."/>
            <person name="Lee S."/>
            <person name="LeVan J.M."/>
            <person name="Lewis L.C."/>
            <person name="London P."/>
            <person name="Lorensuhewa L.M."/>
            <person name="Loulseged H."/>
            <person name="Lovett D.A."/>
            <person name="Lucier A."/>
            <person name="Lucier R.L."/>
            <person name="Ma J."/>
            <person name="Madu R.C."/>
            <person name="Mapua P."/>
            <person name="Martindale A.D."/>
            <person name="Martinez E."/>
            <person name="Massey E."/>
            <person name="Mawhiney S."/>
            <person name="Meador M.G."/>
            <person name="Mendez S."/>
            <person name="Mercado C."/>
            <person name="Mercado I.C."/>
            <person name="Merritt C.E."/>
            <person name="Miner Z.L."/>
            <person name="Minja E."/>
            <person name="Mitchell T."/>
            <person name="Mohabbat F."/>
            <person name="Mohabbat K."/>
            <person name="Montgomery B."/>
            <person name="Moore N."/>
            <person name="Morris S."/>
            <person name="Munidasa M."/>
            <person name="Ngo R.N."/>
            <person name="Nguyen N.B."/>
            <person name="Nickerson E."/>
            <person name="Nwaokelemeh O.O."/>
            <person name="Nwokenkwo S."/>
            <person name="Obregon M."/>
            <person name="Oguh M."/>
            <person name="Oragunye N."/>
            <person name="Oviedo R.J."/>
            <person name="Parish B.J."/>
            <person name="Parker D.N."/>
            <person name="Parrish J."/>
            <person name="Parks K.L."/>
            <person name="Paul H.A."/>
            <person name="Payton B.A."/>
            <person name="Perez A."/>
            <person name="Perrin W."/>
            <person name="Pickens A."/>
            <person name="Primus E.L."/>
            <person name="Pu L.-L."/>
            <person name="Puazo M."/>
            <person name="Quiles M.M."/>
            <person name="Quiroz J.B."/>
            <person name="Rabata D."/>
            <person name="Reeves K."/>
            <person name="Ruiz S.J."/>
            <person name="Shao H."/>
            <person name="Sisson I."/>
            <person name="Sonaike T."/>
            <person name="Sorelle R.P."/>
            <person name="Sutton A.E."/>
            <person name="Svatek A.F."/>
            <person name="Svetz L.A."/>
            <person name="Tamerisa K.S."/>
            <person name="Taylor T.R."/>
            <person name="Teague B."/>
            <person name="Thomas N."/>
            <person name="Thorn R.D."/>
            <person name="Trejos Z.Y."/>
            <person name="Trevino B.K."/>
            <person name="Ukegbu O.N."/>
            <person name="Urban J.B."/>
            <person name="Vasquez L.I."/>
            <person name="Vera V.A."/>
            <person name="Villasana D.M."/>
            <person name="Wang L."/>
            <person name="Ward-Moore S."/>
            <person name="Warren J.T."/>
            <person name="Wei X."/>
            <person name="White F."/>
            <person name="Williamson A.L."/>
            <person name="Wleczyk R."/>
            <person name="Wooden H.S."/>
            <person name="Wooden S.H."/>
            <person name="Yen J."/>
            <person name="Yoon L."/>
            <person name="Yoon V."/>
            <person name="Zorrilla S.E."/>
            <person name="Nelson D."/>
            <person name="Kucherlapati R."/>
            <person name="Weinstock G."/>
            <person name="Gibbs R.A."/>
        </authorList>
    </citation>
    <scope>NUCLEOTIDE SEQUENCE [LARGE SCALE GENOMIC DNA]</scope>
</reference>
<reference key="3">
    <citation type="submission" date="2005-09" db="EMBL/GenBank/DDBJ databases">
        <authorList>
            <person name="Mural R.J."/>
            <person name="Istrail S."/>
            <person name="Sutton G.G."/>
            <person name="Florea L."/>
            <person name="Halpern A.L."/>
            <person name="Mobarry C.M."/>
            <person name="Lippert R."/>
            <person name="Walenz B."/>
            <person name="Shatkay H."/>
            <person name="Dew I."/>
            <person name="Miller J.R."/>
            <person name="Flanigan M.J."/>
            <person name="Edwards N.J."/>
            <person name="Bolanos R."/>
            <person name="Fasulo D."/>
            <person name="Halldorsson B.V."/>
            <person name="Hannenhalli S."/>
            <person name="Turner R."/>
            <person name="Yooseph S."/>
            <person name="Lu F."/>
            <person name="Nusskern D.R."/>
            <person name="Shue B.C."/>
            <person name="Zheng X.H."/>
            <person name="Zhong F."/>
            <person name="Delcher A.L."/>
            <person name="Huson D.H."/>
            <person name="Kravitz S.A."/>
            <person name="Mouchard L."/>
            <person name="Reinert K."/>
            <person name="Remington K.A."/>
            <person name="Clark A.G."/>
            <person name="Waterman M.S."/>
            <person name="Eichler E.E."/>
            <person name="Adams M.D."/>
            <person name="Hunkapiller M.W."/>
            <person name="Myers E.W."/>
            <person name="Venter J.C."/>
        </authorList>
    </citation>
    <scope>NUCLEOTIDE SEQUENCE [LARGE SCALE GENOMIC DNA]</scope>
</reference>
<reference key="4">
    <citation type="journal article" date="2004" name="Genome Res.">
        <title>The status, quality, and expansion of the NIH full-length cDNA project: the Mammalian Gene Collection (MGC).</title>
        <authorList>
            <consortium name="The MGC Project Team"/>
        </authorList>
    </citation>
    <scope>NUCLEOTIDE SEQUENCE [LARGE SCALE MRNA] (ISOFORMS 3 AND 4)</scope>
    <source>
        <tissue>Brain</tissue>
        <tissue>Testis</tissue>
    </source>
</reference>
<reference key="5">
    <citation type="submission" date="2005-03" db="EMBL/GenBank/DDBJ databases">
        <authorList>
            <person name="Totoki Y."/>
            <person name="Toyoda A."/>
            <person name="Takeda T."/>
            <person name="Sakaki Y."/>
            <person name="Tanaka A."/>
            <person name="Yokoyama S."/>
            <person name="Ohara O."/>
            <person name="Nagase T."/>
            <person name="Kikuno R.F."/>
        </authorList>
    </citation>
    <scope>NUCLEOTIDE SEQUENCE [LARGE SCALE MRNA] OF 396-1274 (ISOFORM 1)</scope>
    <scope>VARIANT ASN-487</scope>
    <source>
        <tissue>Brain</tissue>
    </source>
</reference>
<reference key="6">
    <citation type="journal article" date="2007" name="BMC Genomics">
        <title>The full-ORF clone resource of the German cDNA consortium.</title>
        <authorList>
            <person name="Bechtel S."/>
            <person name="Rosenfelder H."/>
            <person name="Duda A."/>
            <person name="Schmidt C.P."/>
            <person name="Ernst U."/>
            <person name="Wellenreuther R."/>
            <person name="Mehrle A."/>
            <person name="Schuster C."/>
            <person name="Bahr A."/>
            <person name="Bloecker H."/>
            <person name="Heubner D."/>
            <person name="Hoerlein A."/>
            <person name="Michel G."/>
            <person name="Wedler H."/>
            <person name="Koehrer K."/>
            <person name="Ottenwaelder B."/>
            <person name="Poustka A."/>
            <person name="Wiemann S."/>
            <person name="Schupp I."/>
        </authorList>
    </citation>
    <scope>NUCLEOTIDE SEQUENCE [LARGE SCALE MRNA] OF 682-1274 (ISOFORM 1)</scope>
</reference>
<reference key="7">
    <citation type="journal article" date="2008" name="Proc. Natl. Acad. Sci. U.S.A.">
        <title>A quantitative atlas of mitotic phosphorylation.</title>
        <authorList>
            <person name="Dephoure N."/>
            <person name="Zhou C."/>
            <person name="Villen J."/>
            <person name="Beausoleil S.A."/>
            <person name="Bakalarski C.E."/>
            <person name="Elledge S.J."/>
            <person name="Gygi S.P."/>
        </authorList>
    </citation>
    <scope>PHOSPHORYLATION [LARGE SCALE ANALYSIS] AT SER-1076</scope>
    <scope>IDENTIFICATION BY MASS SPECTROMETRY [LARGE SCALE ANALYSIS]</scope>
    <source>
        <tissue>Cervix carcinoma</tissue>
    </source>
</reference>
<reference key="8">
    <citation type="journal article" date="2009" name="Anal. Chem.">
        <title>Lys-N and trypsin cover complementary parts of the phosphoproteome in a refined SCX-based approach.</title>
        <authorList>
            <person name="Gauci S."/>
            <person name="Helbig A.O."/>
            <person name="Slijper M."/>
            <person name="Krijgsveld J."/>
            <person name="Heck A.J."/>
            <person name="Mohammed S."/>
        </authorList>
    </citation>
    <scope>ACETYLATION [LARGE SCALE ANALYSIS] AT SER-2</scope>
    <scope>CLEAVAGE OF INITIATOR METHIONINE [LARGE SCALE ANALYSIS]</scope>
    <scope>IDENTIFICATION BY MASS SPECTROMETRY [LARGE SCALE ANALYSIS]</scope>
</reference>
<reference key="9">
    <citation type="journal article" date="2010" name="J. Cell Biol.">
        <title>Family-wide characterization of the DENN domain Rab GDP-GTP exchange factors.</title>
        <authorList>
            <person name="Yoshimura S."/>
            <person name="Gerondopoulos A."/>
            <person name="Linford A."/>
            <person name="Rigden D.J."/>
            <person name="Barr F.A."/>
        </authorList>
    </citation>
    <scope>FUNCTION AS GUANYL-NUCLEOTIDE EXCHANGE FACTOR</scope>
</reference>
<reference key="10">
    <citation type="journal article" date="2010" name="Sci. Signal.">
        <title>Quantitative phosphoproteomics reveals widespread full phosphorylation site occupancy during mitosis.</title>
        <authorList>
            <person name="Olsen J.V."/>
            <person name="Vermeulen M."/>
            <person name="Santamaria A."/>
            <person name="Kumar C."/>
            <person name="Miller M.L."/>
            <person name="Jensen L.J."/>
            <person name="Gnad F."/>
            <person name="Cox J."/>
            <person name="Jensen T.S."/>
            <person name="Nigg E.A."/>
            <person name="Brunak S."/>
            <person name="Mann M."/>
        </authorList>
    </citation>
    <scope>PHOSPHORYLATION [LARGE SCALE ANALYSIS] AT SER-1076</scope>
    <scope>IDENTIFICATION BY MASS SPECTROMETRY [LARGE SCALE ANALYSIS]</scope>
    <source>
        <tissue>Cervix carcinoma</tissue>
    </source>
</reference>
<reference key="11">
    <citation type="journal article" date="2012" name="Proc. Natl. Acad. Sci. U.S.A.">
        <title>N-terminal acetylome analyses and functional insights of the N-terminal acetyltransferase NatB.</title>
        <authorList>
            <person name="Van Damme P."/>
            <person name="Lasa M."/>
            <person name="Polevoda B."/>
            <person name="Gazquez C."/>
            <person name="Elosegui-Artola A."/>
            <person name="Kim D.S."/>
            <person name="De Juan-Pardo E."/>
            <person name="Demeyer K."/>
            <person name="Hole K."/>
            <person name="Larrea E."/>
            <person name="Timmerman E."/>
            <person name="Prieto J."/>
            <person name="Arnesen T."/>
            <person name="Sherman F."/>
            <person name="Gevaert K."/>
            <person name="Aldabe R."/>
        </authorList>
    </citation>
    <scope>ACETYLATION [LARGE SCALE ANALYSIS] AT SER-2</scope>
    <scope>CLEAVAGE OF INITIATOR METHIONINE [LARGE SCALE ANALYSIS]</scope>
    <scope>IDENTIFICATION BY MASS SPECTROMETRY [LARGE SCALE ANALYSIS]</scope>
</reference>
<reference key="12">
    <citation type="journal article" date="2013" name="J. Proteome Res.">
        <title>Toward a comprehensive characterization of a human cancer cell phosphoproteome.</title>
        <authorList>
            <person name="Zhou H."/>
            <person name="Di Palma S."/>
            <person name="Preisinger C."/>
            <person name="Peng M."/>
            <person name="Polat A.N."/>
            <person name="Heck A.J."/>
            <person name="Mohammed S."/>
        </authorList>
    </citation>
    <scope>PHOSPHORYLATION [LARGE SCALE ANALYSIS] AT SER-822 AND SER-1076</scope>
    <scope>IDENTIFICATION BY MASS SPECTROMETRY [LARGE SCALE ANALYSIS]</scope>
    <source>
        <tissue>Cervix carcinoma</tissue>
        <tissue>Erythroleukemia</tissue>
    </source>
</reference>
<reference key="13">
    <citation type="journal article" date="2014" name="J. Proteomics">
        <title>An enzyme assisted RP-RPLC approach for in-depth analysis of human liver phosphoproteome.</title>
        <authorList>
            <person name="Bian Y."/>
            <person name="Song C."/>
            <person name="Cheng K."/>
            <person name="Dong M."/>
            <person name="Wang F."/>
            <person name="Huang J."/>
            <person name="Sun D."/>
            <person name="Wang L."/>
            <person name="Ye M."/>
            <person name="Zou H."/>
        </authorList>
    </citation>
    <scope>PHOSPHORYLATION [LARGE SCALE ANALYSIS] AT SER-1076</scope>
    <scope>IDENTIFICATION BY MASS SPECTROMETRY [LARGE SCALE ANALYSIS]</scope>
    <source>
        <tissue>Liver</tissue>
    </source>
</reference>
<dbReference type="EMBL" id="AK095598">
    <property type="protein sequence ID" value="BAC04583.1"/>
    <property type="status" value="ALT_INIT"/>
    <property type="molecule type" value="mRNA"/>
</dbReference>
<dbReference type="EMBL" id="AK125323">
    <property type="protein sequence ID" value="BAC86129.1"/>
    <property type="molecule type" value="mRNA"/>
</dbReference>
<dbReference type="EMBL" id="AC022080">
    <property type="status" value="NOT_ANNOTATED_CDS"/>
    <property type="molecule type" value="Genomic_DNA"/>
</dbReference>
<dbReference type="EMBL" id="AC068792">
    <property type="status" value="NOT_ANNOTATED_CDS"/>
    <property type="molecule type" value="Genomic_DNA"/>
</dbReference>
<dbReference type="EMBL" id="CH471116">
    <property type="protein sequence ID" value="EAW88553.1"/>
    <property type="molecule type" value="Genomic_DNA"/>
</dbReference>
<dbReference type="EMBL" id="BC020855">
    <property type="protein sequence ID" value="AAH20855.1"/>
    <property type="molecule type" value="mRNA"/>
</dbReference>
<dbReference type="EMBL" id="BC068580">
    <property type="protein sequence ID" value="AAH68580.1"/>
    <property type="molecule type" value="mRNA"/>
</dbReference>
<dbReference type="EMBL" id="AB209341">
    <property type="protein sequence ID" value="BAD92578.1"/>
    <property type="molecule type" value="mRNA"/>
</dbReference>
<dbReference type="EMBL" id="BX537924">
    <property type="protein sequence ID" value="CAD97905.1"/>
    <property type="molecule type" value="mRNA"/>
</dbReference>
<dbReference type="EMBL" id="CR749639">
    <property type="protein sequence ID" value="CAH18433.1"/>
    <property type="molecule type" value="mRNA"/>
</dbReference>
<dbReference type="CCDS" id="CCDS44857.1">
    <molecule id="Q6ZUT9-1"/>
</dbReference>
<dbReference type="CCDS" id="CCDS76542.1">
    <molecule id="Q6ZUT9-2"/>
</dbReference>
<dbReference type="CCDS" id="CCDS91679.1">
    <molecule id="Q6ZUT9-4"/>
</dbReference>
<dbReference type="RefSeq" id="NP_001295268.1">
    <property type="nucleotide sequence ID" value="NM_001308339.1"/>
</dbReference>
<dbReference type="RefSeq" id="NP_001353819.1">
    <molecule id="Q6ZUT9-4"/>
    <property type="nucleotide sequence ID" value="NM_001366890.1"/>
</dbReference>
<dbReference type="RefSeq" id="NP_659410.3">
    <molecule id="Q6ZUT9-1"/>
    <property type="nucleotide sequence ID" value="NM_144973.3"/>
</dbReference>
<dbReference type="SMR" id="Q6ZUT9"/>
<dbReference type="BioGRID" id="127761">
    <property type="interactions" value="19"/>
</dbReference>
<dbReference type="FunCoup" id="Q6ZUT9">
    <property type="interactions" value="1206"/>
</dbReference>
<dbReference type="IntAct" id="Q6ZUT9">
    <property type="interactions" value="4"/>
</dbReference>
<dbReference type="STRING" id="9606.ENSP00000444889"/>
<dbReference type="GlyGen" id="Q6ZUT9">
    <property type="glycosylation" value="1 site, 1 O-linked glycan (1 site)"/>
</dbReference>
<dbReference type="iPTMnet" id="Q6ZUT9"/>
<dbReference type="PhosphoSitePlus" id="Q6ZUT9"/>
<dbReference type="BioMuta" id="DENND5B"/>
<dbReference type="DMDM" id="182676608"/>
<dbReference type="jPOST" id="Q6ZUT9"/>
<dbReference type="MassIVE" id="Q6ZUT9"/>
<dbReference type="PaxDb" id="9606-ENSP00000373734"/>
<dbReference type="PeptideAtlas" id="Q6ZUT9"/>
<dbReference type="ProteomicsDB" id="68365">
    <molecule id="Q6ZUT9-1"/>
</dbReference>
<dbReference type="ProteomicsDB" id="68366">
    <molecule id="Q6ZUT9-2"/>
</dbReference>
<dbReference type="ProteomicsDB" id="68367">
    <molecule id="Q6ZUT9-3"/>
</dbReference>
<dbReference type="ProteomicsDB" id="68368">
    <molecule id="Q6ZUT9-4"/>
</dbReference>
<dbReference type="Pumba" id="Q6ZUT9"/>
<dbReference type="Antibodypedia" id="55109">
    <property type="antibodies" value="68 antibodies from 14 providers"/>
</dbReference>
<dbReference type="DNASU" id="160518"/>
<dbReference type="Ensembl" id="ENST00000354285.8">
    <molecule id="Q6ZUT9-4"/>
    <property type="protein sequence ID" value="ENSP00000346238.4"/>
    <property type="gene ID" value="ENSG00000170456.16"/>
</dbReference>
<dbReference type="Ensembl" id="ENST00000389082.10">
    <molecule id="Q6ZUT9-1"/>
    <property type="protein sequence ID" value="ENSP00000373734.5"/>
    <property type="gene ID" value="ENSG00000170456.16"/>
</dbReference>
<dbReference type="GeneID" id="160518"/>
<dbReference type="KEGG" id="hsa:160518"/>
<dbReference type="MANE-Select" id="ENST00000389082.10">
    <property type="protein sequence ID" value="ENSP00000373734.5"/>
    <property type="RefSeq nucleotide sequence ID" value="NM_144973.4"/>
    <property type="RefSeq protein sequence ID" value="NP_659410.3"/>
</dbReference>
<dbReference type="UCSC" id="uc001rki.2">
    <molecule id="Q6ZUT9-1"/>
    <property type="organism name" value="human"/>
</dbReference>
<dbReference type="AGR" id="HGNC:28338"/>
<dbReference type="CTD" id="160518"/>
<dbReference type="DisGeNET" id="160518"/>
<dbReference type="GeneCards" id="DENND5B"/>
<dbReference type="HGNC" id="HGNC:28338">
    <property type="gene designation" value="DENND5B"/>
</dbReference>
<dbReference type="HPA" id="ENSG00000170456">
    <property type="expression patterns" value="Low tissue specificity"/>
</dbReference>
<dbReference type="MalaCards" id="DENND5B"/>
<dbReference type="MIM" id="617279">
    <property type="type" value="gene"/>
</dbReference>
<dbReference type="neXtProt" id="NX_Q6ZUT9"/>
<dbReference type="OpenTargets" id="ENSG00000170456"/>
<dbReference type="PharmGKB" id="PA164718788"/>
<dbReference type="VEuPathDB" id="HostDB:ENSG00000170456"/>
<dbReference type="eggNOG" id="KOG2080">
    <property type="taxonomic scope" value="Eukaryota"/>
</dbReference>
<dbReference type="GeneTree" id="ENSGT00940000153678"/>
<dbReference type="HOGENOM" id="CLU_004201_2_0_1"/>
<dbReference type="InParanoid" id="Q6ZUT9"/>
<dbReference type="OMA" id="LYQMHHA"/>
<dbReference type="OrthoDB" id="6019893at2759"/>
<dbReference type="PAN-GO" id="Q6ZUT9">
    <property type="GO annotations" value="2 GO annotations based on evolutionary models"/>
</dbReference>
<dbReference type="PhylomeDB" id="Q6ZUT9"/>
<dbReference type="TreeFam" id="TF313237"/>
<dbReference type="PathwayCommons" id="Q6ZUT9"/>
<dbReference type="Reactome" id="R-HSA-8876198">
    <property type="pathway name" value="RAB GEFs exchange GTP for GDP on RABs"/>
</dbReference>
<dbReference type="SignaLink" id="Q6ZUT9"/>
<dbReference type="BioGRID-ORCS" id="160518">
    <property type="hits" value="15 hits in 1153 CRISPR screens"/>
</dbReference>
<dbReference type="ChiTaRS" id="DENND5B">
    <property type="organism name" value="human"/>
</dbReference>
<dbReference type="GenomeRNAi" id="160518"/>
<dbReference type="Pharos" id="Q6ZUT9">
    <property type="development level" value="Tbio"/>
</dbReference>
<dbReference type="PRO" id="PR:Q6ZUT9"/>
<dbReference type="Proteomes" id="UP000005640">
    <property type="component" value="Chromosome 12"/>
</dbReference>
<dbReference type="RNAct" id="Q6ZUT9">
    <property type="molecule type" value="protein"/>
</dbReference>
<dbReference type="Bgee" id="ENSG00000170456">
    <property type="expression patterns" value="Expressed in lateral nuclear group of thalamus and 191 other cell types or tissues"/>
</dbReference>
<dbReference type="ExpressionAtlas" id="Q6ZUT9">
    <property type="expression patterns" value="baseline and differential"/>
</dbReference>
<dbReference type="GO" id="GO:0005829">
    <property type="term" value="C:cytosol"/>
    <property type="evidence" value="ECO:0000304"/>
    <property type="project" value="Reactome"/>
</dbReference>
<dbReference type="GO" id="GO:0016020">
    <property type="term" value="C:membrane"/>
    <property type="evidence" value="ECO:0007669"/>
    <property type="project" value="UniProtKB-SubCell"/>
</dbReference>
<dbReference type="GO" id="GO:0005085">
    <property type="term" value="F:guanyl-nucleotide exchange factor activity"/>
    <property type="evidence" value="ECO:0000314"/>
    <property type="project" value="UniProtKB"/>
</dbReference>
<dbReference type="GO" id="GO:0031267">
    <property type="term" value="F:small GTPase binding"/>
    <property type="evidence" value="ECO:0000318"/>
    <property type="project" value="GO_Central"/>
</dbReference>
<dbReference type="GO" id="GO:1905885">
    <property type="term" value="P:positive regulation of triglyceride transport"/>
    <property type="evidence" value="ECO:0007669"/>
    <property type="project" value="Ensembl"/>
</dbReference>
<dbReference type="CDD" id="cd01757">
    <property type="entry name" value="PLAT_RAB6IP1"/>
    <property type="match status" value="1"/>
</dbReference>
<dbReference type="CDD" id="cd17691">
    <property type="entry name" value="RUN1_DENND5B"/>
    <property type="match status" value="1"/>
</dbReference>
<dbReference type="CDD" id="cd17693">
    <property type="entry name" value="RUN2_DENND5B"/>
    <property type="match status" value="1"/>
</dbReference>
<dbReference type="FunFam" id="1.20.58.900:FF:000003">
    <property type="entry name" value="DENN domain containing 5A"/>
    <property type="match status" value="1"/>
</dbReference>
<dbReference type="FunFam" id="1.20.58.900:FF:000008">
    <property type="entry name" value="DENN domain containing 5B"/>
    <property type="match status" value="1"/>
</dbReference>
<dbReference type="FunFam" id="2.60.60.20:FF:000001">
    <property type="entry name" value="DENN domain containing 5B"/>
    <property type="match status" value="1"/>
</dbReference>
<dbReference type="FunFam" id="1.20.58.900:FF:000007">
    <property type="entry name" value="DENN domain-containing protein 5B"/>
    <property type="match status" value="1"/>
</dbReference>
<dbReference type="Gene3D" id="1.20.58.900">
    <property type="match status" value="3"/>
</dbReference>
<dbReference type="Gene3D" id="3.30.450.200">
    <property type="match status" value="1"/>
</dbReference>
<dbReference type="Gene3D" id="3.40.50.11500">
    <property type="match status" value="1"/>
</dbReference>
<dbReference type="Gene3D" id="2.60.60.20">
    <property type="entry name" value="PLAT/LH2 domain"/>
    <property type="match status" value="1"/>
</dbReference>
<dbReference type="InterPro" id="IPR001194">
    <property type="entry name" value="cDENN_dom"/>
</dbReference>
<dbReference type="InterPro" id="IPR005112">
    <property type="entry name" value="dDENN_dom"/>
</dbReference>
<dbReference type="InterPro" id="IPR047278">
    <property type="entry name" value="DEN5A/B"/>
</dbReference>
<dbReference type="InterPro" id="IPR043153">
    <property type="entry name" value="DENN_C"/>
</dbReference>
<dbReference type="InterPro" id="IPR001024">
    <property type="entry name" value="PLAT/LH2_dom"/>
</dbReference>
<dbReference type="InterPro" id="IPR036392">
    <property type="entry name" value="PLAT/LH2_dom_sf"/>
</dbReference>
<dbReference type="InterPro" id="IPR047277">
    <property type="entry name" value="PLAT_RAB6IP1"/>
</dbReference>
<dbReference type="InterPro" id="IPR047293">
    <property type="entry name" value="RUN1_DENND5B"/>
</dbReference>
<dbReference type="InterPro" id="IPR047292">
    <property type="entry name" value="RUN2_DENND5B"/>
</dbReference>
<dbReference type="InterPro" id="IPR004012">
    <property type="entry name" value="Run_dom"/>
</dbReference>
<dbReference type="InterPro" id="IPR037213">
    <property type="entry name" value="Run_dom_sf"/>
</dbReference>
<dbReference type="InterPro" id="IPR037516">
    <property type="entry name" value="Tripartite_DENN"/>
</dbReference>
<dbReference type="InterPro" id="IPR005113">
    <property type="entry name" value="uDENN_dom"/>
</dbReference>
<dbReference type="PANTHER" id="PTHR46070:SF3">
    <property type="entry name" value="DENN DOMAIN-CONTAINING PROTEIN 5B"/>
    <property type="match status" value="1"/>
</dbReference>
<dbReference type="PANTHER" id="PTHR46070">
    <property type="entry name" value="PINSTRIPE, ISOFORM A"/>
    <property type="match status" value="1"/>
</dbReference>
<dbReference type="Pfam" id="PF03455">
    <property type="entry name" value="dDENN"/>
    <property type="match status" value="1"/>
</dbReference>
<dbReference type="Pfam" id="PF02141">
    <property type="entry name" value="DENN"/>
    <property type="match status" value="1"/>
</dbReference>
<dbReference type="Pfam" id="PF01477">
    <property type="entry name" value="PLAT"/>
    <property type="match status" value="1"/>
</dbReference>
<dbReference type="Pfam" id="PF02759">
    <property type="entry name" value="RUN"/>
    <property type="match status" value="2"/>
</dbReference>
<dbReference type="Pfam" id="PF03456">
    <property type="entry name" value="uDENN"/>
    <property type="match status" value="1"/>
</dbReference>
<dbReference type="SMART" id="SM00801">
    <property type="entry name" value="dDENN"/>
    <property type="match status" value="1"/>
</dbReference>
<dbReference type="SMART" id="SM00799">
    <property type="entry name" value="DENN"/>
    <property type="match status" value="1"/>
</dbReference>
<dbReference type="SMART" id="SM00593">
    <property type="entry name" value="RUN"/>
    <property type="match status" value="2"/>
</dbReference>
<dbReference type="SMART" id="SM00800">
    <property type="entry name" value="uDENN"/>
    <property type="match status" value="1"/>
</dbReference>
<dbReference type="SUPFAM" id="SSF49723">
    <property type="entry name" value="Lipase/lipooxygenase domain (PLAT/LH2 domain)"/>
    <property type="match status" value="1"/>
</dbReference>
<dbReference type="SUPFAM" id="SSF140741">
    <property type="entry name" value="RUN domain-like"/>
    <property type="match status" value="2"/>
</dbReference>
<dbReference type="PROSITE" id="PS50211">
    <property type="entry name" value="DENN"/>
    <property type="match status" value="1"/>
</dbReference>
<dbReference type="PROSITE" id="PS50095">
    <property type="entry name" value="PLAT"/>
    <property type="match status" value="1"/>
</dbReference>
<dbReference type="PROSITE" id="PS50826">
    <property type="entry name" value="RUN"/>
    <property type="match status" value="2"/>
</dbReference>
<organism>
    <name type="scientific">Homo sapiens</name>
    <name type="common">Human</name>
    <dbReference type="NCBI Taxonomy" id="9606"/>
    <lineage>
        <taxon>Eukaryota</taxon>
        <taxon>Metazoa</taxon>
        <taxon>Chordata</taxon>
        <taxon>Craniata</taxon>
        <taxon>Vertebrata</taxon>
        <taxon>Euteleostomi</taxon>
        <taxon>Mammalia</taxon>
        <taxon>Eutheria</taxon>
        <taxon>Euarchontoglires</taxon>
        <taxon>Primates</taxon>
        <taxon>Haplorrhini</taxon>
        <taxon>Catarrhini</taxon>
        <taxon>Hominidae</taxon>
        <taxon>Homo</taxon>
    </lineage>
</organism>
<feature type="initiator methionine" description="Removed" evidence="15 17">
    <location>
        <position position="1"/>
    </location>
</feature>
<feature type="chain" id="PRO_0000326531" description="DENN domain-containing protein 5B">
    <location>
        <begin position="2"/>
        <end position="1274"/>
    </location>
</feature>
<feature type="transmembrane region" description="Helical" evidence="4">
    <location>
        <begin position="916"/>
        <end position="936"/>
    </location>
</feature>
<feature type="domain" description="uDENN" evidence="7">
    <location>
        <begin position="39"/>
        <end position="244"/>
    </location>
</feature>
<feature type="domain" description="cDENN" evidence="7">
    <location>
        <begin position="263"/>
        <end position="399"/>
    </location>
</feature>
<feature type="domain" description="dDENN" evidence="7">
    <location>
        <begin position="401"/>
        <end position="581"/>
    </location>
</feature>
<feature type="domain" description="RUN 1" evidence="6">
    <location>
        <begin position="772"/>
        <end position="932"/>
    </location>
</feature>
<feature type="domain" description="PLAT" evidence="5">
    <location>
        <begin position="936"/>
        <end position="1044"/>
    </location>
</feature>
<feature type="domain" description="RUN 2" evidence="6">
    <location>
        <begin position="1118"/>
        <end position="1267"/>
    </location>
</feature>
<feature type="modified residue" description="N-acetylserine" evidence="15 17">
    <location>
        <position position="2"/>
    </location>
</feature>
<feature type="modified residue" description="Phosphoserine" evidence="1">
    <location>
        <position position="49"/>
    </location>
</feature>
<feature type="modified residue" description="Phosphoserine" evidence="1">
    <location>
        <position position="178"/>
    </location>
</feature>
<feature type="modified residue" description="Phosphoserine" evidence="18">
    <location>
        <position position="822"/>
    </location>
</feature>
<feature type="modified residue" description="Phosphothreonine" evidence="3">
    <location>
        <position position="1062"/>
    </location>
</feature>
<feature type="modified residue" description="Phosphoserine" evidence="3">
    <location>
        <position position="1068"/>
    </location>
</feature>
<feature type="modified residue" description="Phosphoserine" evidence="14 16 18 19">
    <location>
        <position position="1076"/>
    </location>
</feature>
<feature type="modified residue" description="Phosphoserine" evidence="2">
    <location>
        <position position="1079"/>
    </location>
</feature>
<feature type="splice variant" id="VSP_032672" description="In isoform 3." evidence="12">
    <location>
        <begin position="1"/>
        <end position="78"/>
    </location>
</feature>
<feature type="splice variant" id="VSP_032673" description="In isoform 2." evidence="11">
    <original>MSGSCAAPGPGSGSSPAACRFAHYFVLCGIDADSGLEPDELA</original>
    <variation>MGTHHHAQLIFVFLVEMRFHRVDQAGLELLTSGNSPASASRSAEITVVSQHAQPGFLYQWLEADRHGKSQGAANTTS</variation>
    <location>
        <begin position="1"/>
        <end position="42"/>
    </location>
</feature>
<feature type="splice variant" id="VSP_032674" description="In isoform 4." evidence="12">
    <original>A</original>
    <variation>AVLYQWLEADRHGKSQGAANTTS</variation>
    <location>
        <position position="42"/>
    </location>
</feature>
<feature type="splice variant" id="VSP_032675" description="In isoform 3." evidence="12">
    <original>ASFLSDQPEPYLPFLSRFIETQMFATFIDNKIMSQWEEKDPL</original>
    <variation>VKRTIVFLLWLLVALLLILTFLNFLFFCAYAYPYIIDFVNLF</variation>
    <location>
        <begin position="544"/>
        <end position="585"/>
    </location>
</feature>
<feature type="splice variant" id="VSP_032676" description="In isoform 3." evidence="12">
    <location>
        <begin position="586"/>
        <end position="1274"/>
    </location>
</feature>
<feature type="splice variant" id="VSP_032677" description="In isoform 4." evidence="12">
    <original>KYMQEARSLGKNLR</original>
    <variation>VCGLPSWGASQQAP</variation>
    <location>
        <begin position="703"/>
        <end position="716"/>
    </location>
</feature>
<feature type="splice variant" id="VSP_032678" description="In isoform 4." evidence="12">
    <location>
        <begin position="717"/>
        <end position="1274"/>
    </location>
</feature>
<feature type="sequence variant" id="VAR_040076" description="In dbSNP:rs4930979." evidence="8">
    <original>R</original>
    <variation>K</variation>
    <location>
        <position position="52"/>
    </location>
</feature>
<feature type="sequence variant" id="VAR_040077" description="In dbSNP:rs1056320." evidence="8 10">
    <original>H</original>
    <variation>N</variation>
    <location>
        <position position="487"/>
    </location>
</feature>
<feature type="sequence conflict" description="In Ref. 4; AAH68580." evidence="13" ref="4">
    <original>N</original>
    <variation>D</variation>
    <location>
        <position position="434"/>
    </location>
</feature>
<feature type="sequence conflict" description="In Ref. 1; BAC04583." evidence="13" ref="1">
    <original>K</original>
    <variation>R</variation>
    <location>
        <position position="480"/>
    </location>
</feature>
<feature type="sequence conflict" description="In Ref. 1; BAC04583." evidence="13" ref="1">
    <original>M</original>
    <variation>T</variation>
    <location>
        <position position="538"/>
    </location>
</feature>
<feature type="sequence conflict" description="In Ref. 1; BAC04583." evidence="13" ref="1">
    <original>I</original>
    <variation>T</variation>
    <location>
        <position position="1144"/>
    </location>
</feature>
<feature type="sequence conflict" description="In Ref. 1; BAC04583." evidence="13" ref="1">
    <original>V</original>
    <variation>A</variation>
    <location>
        <position position="1149"/>
    </location>
</feature>